<accession>P00817</accession>
<accession>D6VQ12</accession>
<protein>
    <recommendedName>
        <fullName>Inorganic pyrophosphatase</fullName>
        <ecNumber>3.6.1.1</ecNumber>
    </recommendedName>
    <alternativeName>
        <fullName>Pyrophosphate phospho-hydrolase</fullName>
        <shortName>PPase</shortName>
    </alternativeName>
</protein>
<proteinExistence type="evidence at protein level"/>
<reference key="1">
    <citation type="journal article" date="1988" name="Nucleic Acids Res.">
        <title>Cloning, molecular characterization and chromosome localization of the inorganic pyrophosphatase (PPA) gene from S. cerevisiae.</title>
        <authorList>
            <person name="Kolakowski L.F. Jr."/>
            <person name="Schloesser M."/>
            <person name="Cooperman B.S."/>
        </authorList>
    </citation>
    <scope>NUCLEOTIDE SEQUENCE [GENOMIC DNA]</scope>
    <source>
        <strain>ATCC 26109 / X2180</strain>
    </source>
</reference>
<reference key="2">
    <citation type="journal article" date="1994" name="EMBO J.">
        <title>Complete DNA sequence of yeast chromosome II.</title>
        <authorList>
            <person name="Feldmann H."/>
            <person name="Aigle M."/>
            <person name="Aljinovic G."/>
            <person name="Andre B."/>
            <person name="Baclet M.C."/>
            <person name="Barthe C."/>
            <person name="Baur A."/>
            <person name="Becam A.-M."/>
            <person name="Biteau N."/>
            <person name="Boles E."/>
            <person name="Brandt T."/>
            <person name="Brendel M."/>
            <person name="Brueckner M."/>
            <person name="Bussereau F."/>
            <person name="Christiansen C."/>
            <person name="Contreras R."/>
            <person name="Crouzet M."/>
            <person name="Cziepluch C."/>
            <person name="Demolis N."/>
            <person name="Delaveau T."/>
            <person name="Doignon F."/>
            <person name="Domdey H."/>
            <person name="Duesterhus S."/>
            <person name="Dubois E."/>
            <person name="Dujon B."/>
            <person name="El Bakkoury M."/>
            <person name="Entian K.-D."/>
            <person name="Feuermann M."/>
            <person name="Fiers W."/>
            <person name="Fobo G.M."/>
            <person name="Fritz C."/>
            <person name="Gassenhuber J."/>
            <person name="Glansdorff N."/>
            <person name="Goffeau A."/>
            <person name="Grivell L.A."/>
            <person name="de Haan M."/>
            <person name="Hein C."/>
            <person name="Herbert C.J."/>
            <person name="Hollenberg C.P."/>
            <person name="Holmstroem K."/>
            <person name="Jacq C."/>
            <person name="Jacquet M."/>
            <person name="Jauniaux J.-C."/>
            <person name="Jonniaux J.-L."/>
            <person name="Kallesoee T."/>
            <person name="Kiesau P."/>
            <person name="Kirchrath L."/>
            <person name="Koetter P."/>
            <person name="Korol S."/>
            <person name="Liebl S."/>
            <person name="Logghe M."/>
            <person name="Lohan A.J.E."/>
            <person name="Louis E.J."/>
            <person name="Li Z.Y."/>
            <person name="Maat M.J."/>
            <person name="Mallet L."/>
            <person name="Mannhaupt G."/>
            <person name="Messenguy F."/>
            <person name="Miosga T."/>
            <person name="Molemans F."/>
            <person name="Mueller S."/>
            <person name="Nasr F."/>
            <person name="Obermaier B."/>
            <person name="Perea J."/>
            <person name="Pierard A."/>
            <person name="Piravandi E."/>
            <person name="Pohl F.M."/>
            <person name="Pohl T.M."/>
            <person name="Potier S."/>
            <person name="Proft M."/>
            <person name="Purnelle B."/>
            <person name="Ramezani Rad M."/>
            <person name="Rieger M."/>
            <person name="Rose M."/>
            <person name="Schaaff-Gerstenschlaeger I."/>
            <person name="Scherens B."/>
            <person name="Schwarzlose C."/>
            <person name="Skala J."/>
            <person name="Slonimski P.P."/>
            <person name="Smits P.H.M."/>
            <person name="Souciet J.-L."/>
            <person name="Steensma H.Y."/>
            <person name="Stucka R."/>
            <person name="Urrestarazu L.A."/>
            <person name="van der Aart Q.J.M."/>
            <person name="Van Dyck L."/>
            <person name="Vassarotti A."/>
            <person name="Vetter I."/>
            <person name="Vierendeels F."/>
            <person name="Vissers S."/>
            <person name="Wagner G."/>
            <person name="de Wergifosse P."/>
            <person name="Wolfe K.H."/>
            <person name="Zagulski M."/>
            <person name="Zimmermann F.K."/>
            <person name="Mewes H.-W."/>
            <person name="Kleine K."/>
        </authorList>
    </citation>
    <scope>NUCLEOTIDE SEQUENCE [LARGE SCALE GENOMIC DNA]</scope>
    <source>
        <strain>ATCC 204508 / S288c</strain>
    </source>
</reference>
<reference key="3">
    <citation type="journal article" date="2014" name="G3 (Bethesda)">
        <title>The reference genome sequence of Saccharomyces cerevisiae: Then and now.</title>
        <authorList>
            <person name="Engel S.R."/>
            <person name="Dietrich F.S."/>
            <person name="Fisk D.G."/>
            <person name="Binkley G."/>
            <person name="Balakrishnan R."/>
            <person name="Costanzo M.C."/>
            <person name="Dwight S.S."/>
            <person name="Hitz B.C."/>
            <person name="Karra K."/>
            <person name="Nash R.S."/>
            <person name="Weng S."/>
            <person name="Wong E.D."/>
            <person name="Lloyd P."/>
            <person name="Skrzypek M.S."/>
            <person name="Miyasato S.R."/>
            <person name="Simison M."/>
            <person name="Cherry J.M."/>
        </authorList>
    </citation>
    <scope>GENOME REANNOTATION</scope>
    <source>
        <strain>ATCC 204508 / S288c</strain>
    </source>
</reference>
<reference key="4">
    <citation type="journal article" date="2007" name="Genome Res.">
        <title>Approaching a complete repository of sequence-verified protein-encoding clones for Saccharomyces cerevisiae.</title>
        <authorList>
            <person name="Hu Y."/>
            <person name="Rolfs A."/>
            <person name="Bhullar B."/>
            <person name="Murthy T.V.S."/>
            <person name="Zhu C."/>
            <person name="Berger M.F."/>
            <person name="Camargo A.A."/>
            <person name="Kelley F."/>
            <person name="McCarron S."/>
            <person name="Jepson D."/>
            <person name="Richardson A."/>
            <person name="Raphael J."/>
            <person name="Moreira D."/>
            <person name="Taycher E."/>
            <person name="Zuo D."/>
            <person name="Mohr S."/>
            <person name="Kane M.F."/>
            <person name="Williamson J."/>
            <person name="Simpson A.J.G."/>
            <person name="Bulyk M.L."/>
            <person name="Harlow E."/>
            <person name="Marsischky G."/>
            <person name="Kolodner R.D."/>
            <person name="LaBaer J."/>
        </authorList>
    </citation>
    <scope>NUCLEOTIDE SEQUENCE [GENOMIC DNA]</scope>
    <source>
        <strain>ATCC 204508 / S288c</strain>
    </source>
</reference>
<reference key="5">
    <citation type="journal article" date="1978" name="J. Biol. Chem.">
        <title>Covalent structural analysis of yeast inorganic pyrophosphatase.</title>
        <authorList>
            <person name="Cohen S.A."/>
            <person name="Sterner R."/>
            <person name="Keim P.S."/>
            <person name="Heinrikson R.L."/>
        </authorList>
    </citation>
    <scope>PROTEIN SEQUENCE OF 2-287</scope>
</reference>
<reference key="6">
    <citation type="journal article" date="1994" name="Electrophoresis">
        <title>Protein identifications for a Saccharomyces cerevisiae protein database.</title>
        <authorList>
            <person name="Garrels J.I."/>
            <person name="Futcher B."/>
            <person name="Kobayashi R."/>
            <person name="Latter G.I."/>
            <person name="Schwender B."/>
            <person name="Volpe T."/>
            <person name="Warner J.R."/>
            <person name="McLaughlin C.S."/>
        </authorList>
    </citation>
    <scope>PROTEIN SEQUENCE OF 26-36 AND 240-252</scope>
    <source>
        <strain>ATCC 204508 / S288c</strain>
    </source>
</reference>
<reference key="7">
    <citation type="journal article" date="1996" name="FEMS Microbiol. Lett.">
        <title>Protein expression during exponential growth in 0.7 M NaCl medium of Saccharomyces cerevisiae.</title>
        <authorList>
            <person name="Norbeck J."/>
            <person name="Blomberg A."/>
        </authorList>
    </citation>
    <scope>PROTEIN SEQUENCE OF 240-250</scope>
    <source>
        <strain>ATCC 38531 / Y41</strain>
    </source>
</reference>
<reference key="8">
    <citation type="journal article" date="1992" name="FEBS Lett.">
        <title>Tyrosine-89 is important for enzymatic activity of S. cerevisiae inorganic pyrophosphatase.</title>
        <authorList>
            <person name="Raznikov A.V."/>
            <person name="Sklyankina V.A."/>
            <person name="Avaeva S.M."/>
        </authorList>
    </citation>
    <scope>ACTIVE SITE TYR-90</scope>
</reference>
<reference key="9">
    <citation type="journal article" date="1980" name="Biochemistry">
        <title>Identification of an arginine important for enzymatic activity within the covalent structure of yeast inorganic pyrophosphatase.</title>
        <authorList>
            <person name="Bond M.W."/>
            <person name="Chiu N.Y."/>
            <person name="Cooperman B.S."/>
        </authorList>
    </citation>
    <scope>ACTIVE SITE</scope>
</reference>
<reference key="10">
    <citation type="journal article" date="2003" name="Nature">
        <title>Global analysis of protein expression in yeast.</title>
        <authorList>
            <person name="Ghaemmaghami S."/>
            <person name="Huh W.-K."/>
            <person name="Bower K."/>
            <person name="Howson R.W."/>
            <person name="Belle A."/>
            <person name="Dephoure N."/>
            <person name="O'Shea E.K."/>
            <person name="Weissman J.S."/>
        </authorList>
    </citation>
    <scope>LEVEL OF PROTEIN EXPRESSION [LARGE SCALE ANALYSIS]</scope>
</reference>
<reference key="11">
    <citation type="journal article" date="2005" name="Mol. Cell. Proteomics">
        <title>Quantitative phosphoproteomics applied to the yeast pheromone signaling pathway.</title>
        <authorList>
            <person name="Gruhler A."/>
            <person name="Olsen J.V."/>
            <person name="Mohammed S."/>
            <person name="Mortensen P."/>
            <person name="Faergeman N.J."/>
            <person name="Mann M."/>
            <person name="Jensen O.N."/>
        </authorList>
    </citation>
    <scope>PHOSPHORYLATION [LARGE SCALE ANALYSIS] AT THR-251 AND SER-286</scope>
    <scope>IDENTIFICATION BY MASS SPECTROMETRY [LARGE SCALE ANALYSIS]</scope>
    <source>
        <strain>YAL6B</strain>
    </source>
</reference>
<reference key="12">
    <citation type="journal article" date="2007" name="J. Proteome Res.">
        <title>Large-scale phosphorylation analysis of alpha-factor-arrested Saccharomyces cerevisiae.</title>
        <authorList>
            <person name="Li X."/>
            <person name="Gerber S.A."/>
            <person name="Rudner A.D."/>
            <person name="Beausoleil S.A."/>
            <person name="Haas W."/>
            <person name="Villen J."/>
            <person name="Elias J.E."/>
            <person name="Gygi S.P."/>
        </authorList>
    </citation>
    <scope>PHOSPHORYLATION [LARGE SCALE ANALYSIS] AT THR-251</scope>
    <scope>IDENTIFICATION BY MASS SPECTROMETRY [LARGE SCALE ANALYSIS]</scope>
    <source>
        <strain>ADR376</strain>
    </source>
</reference>
<reference key="13">
    <citation type="journal article" date="2008" name="Mol. Cell. Proteomics">
        <title>A multidimensional chromatography technology for in-depth phosphoproteome analysis.</title>
        <authorList>
            <person name="Albuquerque C.P."/>
            <person name="Smolka M.B."/>
            <person name="Payne S.H."/>
            <person name="Bafna V."/>
            <person name="Eng J."/>
            <person name="Zhou H."/>
        </authorList>
    </citation>
    <scope>PHOSPHORYLATION [LARGE SCALE ANALYSIS] AT THR-65 AND SER-266</scope>
    <scope>IDENTIFICATION BY MASS SPECTROMETRY [LARGE SCALE ANALYSIS]</scope>
</reference>
<reference key="14">
    <citation type="journal article" date="2009" name="Science">
        <title>Global analysis of Cdk1 substrate phosphorylation sites provides insights into evolution.</title>
        <authorList>
            <person name="Holt L.J."/>
            <person name="Tuch B.B."/>
            <person name="Villen J."/>
            <person name="Johnson A.D."/>
            <person name="Gygi S.P."/>
            <person name="Morgan D.O."/>
        </authorList>
    </citation>
    <scope>PHOSPHORYLATION [LARGE SCALE ANALYSIS] AT SER-266</scope>
    <scope>IDENTIFICATION BY MASS SPECTROMETRY [LARGE SCALE ANALYSIS]</scope>
</reference>
<reference key="15">
    <citation type="journal article" date="2012" name="Proteomics">
        <title>Sites of ubiquitin attachment in Saccharomyces cerevisiae.</title>
        <authorList>
            <person name="Starita L.M."/>
            <person name="Lo R.S."/>
            <person name="Eng J.K."/>
            <person name="von Haller P.D."/>
            <person name="Fields S."/>
        </authorList>
    </citation>
    <scope>UBIQUITINATION [LARGE SCALE ANALYSIS] AT LYS-239 AND LYS-279</scope>
    <scope>IDENTIFICATION BY MASS SPECTROMETRY [LARGE SCALE ANALYSIS]</scope>
</reference>
<reference key="16">
    <citation type="journal article" date="1981" name="Dokl. Akad. Nauk SSSR">
        <title>X-ray diffraction study of inorganic pyrophosphatase from baker's yeast at the 3-A resolution.</title>
        <authorList>
            <person name="Arutiunian E.G."/>
            <person name="Terzian S.S."/>
            <person name="Voronova A.A."/>
            <person name="Kuranova I.P."/>
            <person name="Smirnova E.A."/>
            <person name="Vainstein B.K."/>
            <person name="Hohne W.E."/>
            <person name="Hansen G."/>
        </authorList>
    </citation>
    <scope>X-RAY CRYSTALLOGRAPHY (3.0 ANGSTROMS)</scope>
</reference>
<reference key="17">
    <citation type="journal article" date="1996" name="Structure">
        <title>The structural basis for pyrophosphatase catalysis.</title>
        <authorList>
            <person name="Heikinheimo P."/>
            <person name="Lehtonen J."/>
            <person name="Baykov A."/>
            <person name="Lahti R."/>
            <person name="Cooperman B.S."/>
            <person name="Goldman A."/>
        </authorList>
    </citation>
    <scope>X-RAY CRYSTALLOGRAPHY (2.2 ANGSTROMS)</scope>
</reference>
<reference key="18">
    <citation type="submission" date="1997-12" db="PDB data bank">
        <authorList>
            <person name="Swaminathan K."/>
            <person name="Cooperman B.S."/>
            <person name="Lahti R."/>
            <person name="Voet D."/>
        </authorList>
    </citation>
    <scope>X-RAY CRYSTALLOGRAPHY (2.1 ANGSTROMS)</scope>
</reference>
<reference key="19">
    <citation type="journal article" date="1998" name="J. Mol. Biol.">
        <title>The R78K and D117E active-site variants of Saccharomyces cerevisiae soluble inorganic pyrophosphatase: structural studies and mechanistic implications.</title>
        <authorList>
            <person name="Tuominen V."/>
            <person name="Heikinheimo P."/>
            <person name="Kajander T."/>
            <person name="Torkkel T."/>
            <person name="Hyytia T."/>
            <person name="Kapyla J."/>
            <person name="Lahti R."/>
            <person name="Cooperman B.S."/>
            <person name="Goldman A."/>
        </authorList>
    </citation>
    <scope>X-RAY CRYSTALLOGRAPHY (2.15 ANGSTROMS) OF MUTANTS LYS-79 AND LYS-118</scope>
</reference>
<reference key="20">
    <citation type="journal article" date="1990" name="Biochim. Biophys. Acta">
        <title>Conservation of functional residues between yeast and E. coli inorganic pyrophosphatases.</title>
        <authorList>
            <person name="Lahti R."/>
            <person name="Kolakowski L.F. Jr."/>
            <person name="Heinonen J."/>
            <person name="Vihinen M."/>
            <person name="Pohjanoksa K."/>
            <person name="Cooperman B.S."/>
        </authorList>
    </citation>
    <scope>SIMILARITY TO E.COLI AND K.LACTIS PPASES</scope>
</reference>
<name>IPYR_YEAST</name>
<organism>
    <name type="scientific">Saccharomyces cerevisiae (strain ATCC 204508 / S288c)</name>
    <name type="common">Baker's yeast</name>
    <dbReference type="NCBI Taxonomy" id="559292"/>
    <lineage>
        <taxon>Eukaryota</taxon>
        <taxon>Fungi</taxon>
        <taxon>Dikarya</taxon>
        <taxon>Ascomycota</taxon>
        <taxon>Saccharomycotina</taxon>
        <taxon>Saccharomycetes</taxon>
        <taxon>Saccharomycetales</taxon>
        <taxon>Saccharomycetaceae</taxon>
        <taxon>Saccharomyces</taxon>
    </lineage>
</organism>
<gene>
    <name type="primary">IPP1</name>
    <name type="synonym">PPA</name>
    <name type="synonym">PPA1</name>
    <name type="ordered locus">YBR011C</name>
    <name type="ORF">YBR0202</name>
</gene>
<comment type="catalytic activity">
    <reaction>
        <text>diphosphate + H2O = 2 phosphate + H(+)</text>
        <dbReference type="Rhea" id="RHEA:24576"/>
        <dbReference type="ChEBI" id="CHEBI:15377"/>
        <dbReference type="ChEBI" id="CHEBI:15378"/>
        <dbReference type="ChEBI" id="CHEBI:33019"/>
        <dbReference type="ChEBI" id="CHEBI:43474"/>
        <dbReference type="EC" id="3.6.1.1"/>
    </reaction>
</comment>
<comment type="cofactor">
    <cofactor evidence="1">
        <name>Mg(2+)</name>
        <dbReference type="ChEBI" id="CHEBI:18420"/>
    </cofactor>
</comment>
<comment type="subunit">
    <text>Homodimer.</text>
</comment>
<comment type="interaction">
    <interactant intactId="EBI-9338">
        <id>P00817</id>
    </interactant>
    <interactant intactId="EBI-16219">
        <id>P39940</id>
        <label>RSP5</label>
    </interactant>
    <organismsDiffer>false</organismsDiffer>
    <experiments>2</experiments>
</comment>
<comment type="subcellular location">
    <subcellularLocation>
        <location>Cytoplasm</location>
    </subcellularLocation>
</comment>
<comment type="miscellaneous">
    <text evidence="3">Present with 68400 molecules/cell in log phase SD medium.</text>
</comment>
<comment type="similarity">
    <text evidence="5">Belongs to the PPase family.</text>
</comment>
<evidence type="ECO:0000250" key="1"/>
<evidence type="ECO:0000269" key="2">
    <source>
    </source>
</evidence>
<evidence type="ECO:0000269" key="3">
    <source>
    </source>
</evidence>
<evidence type="ECO:0000269" key="4">
    <source>
    </source>
</evidence>
<evidence type="ECO:0000305" key="5"/>
<evidence type="ECO:0007744" key="6">
    <source>
    </source>
</evidence>
<evidence type="ECO:0007744" key="7">
    <source>
    </source>
</evidence>
<evidence type="ECO:0007744" key="8">
    <source>
    </source>
</evidence>
<evidence type="ECO:0007744" key="9">
    <source>
    </source>
</evidence>
<evidence type="ECO:0007744" key="10">
    <source>
    </source>
</evidence>
<evidence type="ECO:0007829" key="11">
    <source>
        <dbReference type="PDB" id="1E6A"/>
    </source>
</evidence>
<evidence type="ECO:0007829" key="12">
    <source>
        <dbReference type="PDB" id="1E9G"/>
    </source>
</evidence>
<evidence type="ECO:0007829" key="13">
    <source>
        <dbReference type="PDB" id="1M38"/>
    </source>
</evidence>
<evidence type="ECO:0007829" key="14">
    <source>
        <dbReference type="PDB" id="1PYP"/>
    </source>
</evidence>
<evidence type="ECO:0007829" key="15">
    <source>
        <dbReference type="PDB" id="1YPP"/>
    </source>
</evidence>
<evidence type="ECO:0007829" key="16">
    <source>
        <dbReference type="PDB" id="2IHP"/>
    </source>
</evidence>
<evidence type="ECO:0007829" key="17">
    <source>
        <dbReference type="PDB" id="2IK1"/>
    </source>
</evidence>
<dbReference type="EC" id="3.6.1.1"/>
<dbReference type="EMBL" id="X13253">
    <property type="protein sequence ID" value="CAA31629.1"/>
    <property type="molecule type" value="Genomic_DNA"/>
</dbReference>
<dbReference type="EMBL" id="Z35880">
    <property type="protein sequence ID" value="CAA84949.1"/>
    <property type="molecule type" value="Genomic_DNA"/>
</dbReference>
<dbReference type="EMBL" id="AY692953">
    <property type="protein sequence ID" value="AAT92972.1"/>
    <property type="molecule type" value="Genomic_DNA"/>
</dbReference>
<dbReference type="EMBL" id="BK006936">
    <property type="protein sequence ID" value="DAA07132.1"/>
    <property type="molecule type" value="Genomic_DNA"/>
</dbReference>
<dbReference type="PIR" id="S45864">
    <property type="entry name" value="PWBY"/>
</dbReference>
<dbReference type="RefSeq" id="NP_009565.1">
    <property type="nucleotide sequence ID" value="NM_001178359.1"/>
</dbReference>
<dbReference type="PDB" id="117E">
    <property type="method" value="X-ray"/>
    <property type="resolution" value="2.15 A"/>
    <property type="chains" value="A/B=2-287"/>
</dbReference>
<dbReference type="PDB" id="1E6A">
    <property type="method" value="X-ray"/>
    <property type="resolution" value="1.90 A"/>
    <property type="chains" value="A/B=2-287"/>
</dbReference>
<dbReference type="PDB" id="1E9G">
    <property type="method" value="X-ray"/>
    <property type="resolution" value="1.15 A"/>
    <property type="chains" value="A/B=2-287"/>
</dbReference>
<dbReference type="PDB" id="1HUJ">
    <property type="method" value="X-ray"/>
    <property type="resolution" value="2.10 A"/>
    <property type="chains" value="A/B=2-282"/>
</dbReference>
<dbReference type="PDB" id="1HUK">
    <property type="method" value="X-ray"/>
    <property type="resolution" value="2.20 A"/>
    <property type="chains" value="A/B=2-282"/>
</dbReference>
<dbReference type="PDB" id="1M38">
    <property type="method" value="X-ray"/>
    <property type="resolution" value="1.80 A"/>
    <property type="chains" value="A/B=1-287"/>
</dbReference>
<dbReference type="PDB" id="1PYP">
    <property type="method" value="X-ray"/>
    <property type="resolution" value="3.00 A"/>
    <property type="chains" value="A/B=2-287"/>
</dbReference>
<dbReference type="PDB" id="1WGI">
    <property type="method" value="X-ray"/>
    <property type="resolution" value="2.20 A"/>
    <property type="chains" value="A/B=2-287"/>
</dbReference>
<dbReference type="PDB" id="1WGJ">
    <property type="method" value="X-ray"/>
    <property type="resolution" value="2.00 A"/>
    <property type="chains" value="A/B=2-287"/>
</dbReference>
<dbReference type="PDB" id="1YPP">
    <property type="method" value="X-ray"/>
    <property type="resolution" value="2.40 A"/>
    <property type="chains" value="A/B=2-287"/>
</dbReference>
<dbReference type="PDB" id="2IHP">
    <property type="method" value="X-ray"/>
    <property type="resolution" value="1.50 A"/>
    <property type="chains" value="A/B=2-287"/>
</dbReference>
<dbReference type="PDB" id="2IK0">
    <property type="method" value="X-ray"/>
    <property type="resolution" value="1.70 A"/>
    <property type="chains" value="A/B=2-287"/>
</dbReference>
<dbReference type="PDB" id="2IK1">
    <property type="method" value="X-ray"/>
    <property type="resolution" value="1.70 A"/>
    <property type="chains" value="A/B=2-287"/>
</dbReference>
<dbReference type="PDB" id="2IK2">
    <property type="method" value="X-ray"/>
    <property type="resolution" value="1.80 A"/>
    <property type="chains" value="A/B=2-287"/>
</dbReference>
<dbReference type="PDB" id="2IK4">
    <property type="method" value="X-ray"/>
    <property type="resolution" value="1.80 A"/>
    <property type="chains" value="A/B=2-287"/>
</dbReference>
<dbReference type="PDB" id="2IK6">
    <property type="method" value="X-ray"/>
    <property type="resolution" value="1.80 A"/>
    <property type="chains" value="A/B=2-287"/>
</dbReference>
<dbReference type="PDB" id="2IK7">
    <property type="method" value="X-ray"/>
    <property type="resolution" value="1.90 A"/>
    <property type="chains" value="A/B=2-287"/>
</dbReference>
<dbReference type="PDB" id="2IK9">
    <property type="method" value="X-ray"/>
    <property type="resolution" value="1.50 A"/>
    <property type="chains" value="A/B=2-287"/>
</dbReference>
<dbReference type="PDB" id="8PRK">
    <property type="method" value="X-ray"/>
    <property type="resolution" value="1.85 A"/>
    <property type="chains" value="A/B=1-287"/>
</dbReference>
<dbReference type="PDBsum" id="117E"/>
<dbReference type="PDBsum" id="1E6A"/>
<dbReference type="PDBsum" id="1E9G"/>
<dbReference type="PDBsum" id="1HUJ"/>
<dbReference type="PDBsum" id="1HUK"/>
<dbReference type="PDBsum" id="1M38"/>
<dbReference type="PDBsum" id="1PYP"/>
<dbReference type="PDBsum" id="1WGI"/>
<dbReference type="PDBsum" id="1WGJ"/>
<dbReference type="PDBsum" id="1YPP"/>
<dbReference type="PDBsum" id="2IHP"/>
<dbReference type="PDBsum" id="2IK0"/>
<dbReference type="PDBsum" id="2IK1"/>
<dbReference type="PDBsum" id="2IK2"/>
<dbReference type="PDBsum" id="2IK4"/>
<dbReference type="PDBsum" id="2IK6"/>
<dbReference type="PDBsum" id="2IK7"/>
<dbReference type="PDBsum" id="2IK9"/>
<dbReference type="PDBsum" id="8PRK"/>
<dbReference type="SMR" id="P00817"/>
<dbReference type="BioGRID" id="32712">
    <property type="interactions" value="436"/>
</dbReference>
<dbReference type="DIP" id="DIP-5753N"/>
<dbReference type="FunCoup" id="P00817">
    <property type="interactions" value="1317"/>
</dbReference>
<dbReference type="IntAct" id="P00817">
    <property type="interactions" value="52"/>
</dbReference>
<dbReference type="MINT" id="P00817"/>
<dbReference type="STRING" id="4932.YBR011C"/>
<dbReference type="BindingDB" id="P00817"/>
<dbReference type="iPTMnet" id="P00817"/>
<dbReference type="PaxDb" id="4932-YBR011C"/>
<dbReference type="PeptideAtlas" id="P00817"/>
<dbReference type="TopDownProteomics" id="P00817"/>
<dbReference type="EnsemblFungi" id="YBR011C_mRNA">
    <property type="protein sequence ID" value="YBR011C"/>
    <property type="gene ID" value="YBR011C"/>
</dbReference>
<dbReference type="GeneID" id="852296"/>
<dbReference type="KEGG" id="sce:YBR011C"/>
<dbReference type="AGR" id="SGD:S000000215"/>
<dbReference type="SGD" id="S000000215">
    <property type="gene designation" value="IPP1"/>
</dbReference>
<dbReference type="VEuPathDB" id="FungiDB:YBR011C"/>
<dbReference type="eggNOG" id="KOG1626">
    <property type="taxonomic scope" value="Eukaryota"/>
</dbReference>
<dbReference type="GeneTree" id="ENSGT00390000017004"/>
<dbReference type="HOGENOM" id="CLU_040684_0_2_1"/>
<dbReference type="InParanoid" id="P00817"/>
<dbReference type="OMA" id="LYANEQK"/>
<dbReference type="OrthoDB" id="1608002at2759"/>
<dbReference type="BioCyc" id="YEAST:YBR011C-MONOMER"/>
<dbReference type="BRENDA" id="3.6.1.1">
    <property type="organism ID" value="984"/>
</dbReference>
<dbReference type="Reactome" id="R-SCE-379716">
    <property type="pathway name" value="Cytosolic tRNA aminoacylation"/>
</dbReference>
<dbReference type="Reactome" id="R-SCE-379726">
    <property type="pathway name" value="Mitochondrial tRNA aminoacylation"/>
</dbReference>
<dbReference type="Reactome" id="R-SCE-71737">
    <property type="pathway name" value="Pyrophosphate hydrolysis"/>
</dbReference>
<dbReference type="BioGRID-ORCS" id="852296">
    <property type="hits" value="6 hits in 10 CRISPR screens"/>
</dbReference>
<dbReference type="EvolutionaryTrace" id="P00817"/>
<dbReference type="PRO" id="PR:P00817"/>
<dbReference type="Proteomes" id="UP000002311">
    <property type="component" value="Chromosome II"/>
</dbReference>
<dbReference type="RNAct" id="P00817">
    <property type="molecule type" value="protein"/>
</dbReference>
<dbReference type="GO" id="GO:0005737">
    <property type="term" value="C:cytoplasm"/>
    <property type="evidence" value="ECO:0007005"/>
    <property type="project" value="SGD"/>
</dbReference>
<dbReference type="GO" id="GO:0005634">
    <property type="term" value="C:nucleus"/>
    <property type="evidence" value="ECO:0007005"/>
    <property type="project" value="SGD"/>
</dbReference>
<dbReference type="GO" id="GO:0004427">
    <property type="term" value="F:inorganic diphosphate phosphatase activity"/>
    <property type="evidence" value="ECO:0000314"/>
    <property type="project" value="SGD"/>
</dbReference>
<dbReference type="GO" id="GO:0000287">
    <property type="term" value="F:magnesium ion binding"/>
    <property type="evidence" value="ECO:0007669"/>
    <property type="project" value="InterPro"/>
</dbReference>
<dbReference type="GO" id="GO:0006796">
    <property type="term" value="P:phosphate-containing compound metabolic process"/>
    <property type="evidence" value="ECO:0000318"/>
    <property type="project" value="GO_Central"/>
</dbReference>
<dbReference type="CDD" id="cd00412">
    <property type="entry name" value="pyrophosphatase"/>
    <property type="match status" value="1"/>
</dbReference>
<dbReference type="FunFam" id="3.90.80.10:FF:000004">
    <property type="entry name" value="Inorganic pyrophosphatase"/>
    <property type="match status" value="1"/>
</dbReference>
<dbReference type="Gene3D" id="3.90.80.10">
    <property type="entry name" value="Inorganic pyrophosphatase"/>
    <property type="match status" value="1"/>
</dbReference>
<dbReference type="InterPro" id="IPR008162">
    <property type="entry name" value="Pyrophosphatase"/>
</dbReference>
<dbReference type="InterPro" id="IPR036649">
    <property type="entry name" value="Pyrophosphatase_sf"/>
</dbReference>
<dbReference type="PANTHER" id="PTHR10286">
    <property type="entry name" value="INORGANIC PYROPHOSPHATASE"/>
    <property type="match status" value="1"/>
</dbReference>
<dbReference type="Pfam" id="PF00719">
    <property type="entry name" value="Pyrophosphatase"/>
    <property type="match status" value="1"/>
</dbReference>
<dbReference type="SUPFAM" id="SSF50324">
    <property type="entry name" value="Inorganic pyrophosphatase"/>
    <property type="match status" value="1"/>
</dbReference>
<dbReference type="PROSITE" id="PS00387">
    <property type="entry name" value="PPASE"/>
    <property type="match status" value="1"/>
</dbReference>
<keyword id="KW-0002">3D-structure</keyword>
<keyword id="KW-0963">Cytoplasm</keyword>
<keyword id="KW-0903">Direct protein sequencing</keyword>
<keyword id="KW-0378">Hydrolase</keyword>
<keyword id="KW-1017">Isopeptide bond</keyword>
<keyword id="KW-0460">Magnesium</keyword>
<keyword id="KW-0479">Metal-binding</keyword>
<keyword id="KW-0597">Phosphoprotein</keyword>
<keyword id="KW-1185">Reference proteome</keyword>
<keyword id="KW-0832">Ubl conjugation</keyword>
<feature type="initiator methionine" description="Removed" evidence="4">
    <location>
        <position position="1"/>
    </location>
</feature>
<feature type="chain" id="PRO_0000137588" description="Inorganic pyrophosphatase">
    <location>
        <begin position="2"/>
        <end position="287"/>
    </location>
</feature>
<feature type="active site" description="Proton donor" evidence="2">
    <location>
        <position position="90"/>
    </location>
</feature>
<feature type="binding site">
    <location>
        <position position="79"/>
    </location>
    <ligand>
        <name>diphosphate</name>
        <dbReference type="ChEBI" id="CHEBI:33019"/>
    </ligand>
</feature>
<feature type="binding site">
    <location>
        <position position="116"/>
    </location>
    <ligand>
        <name>Mg(2+)</name>
        <dbReference type="ChEBI" id="CHEBI:18420"/>
        <label>1</label>
    </ligand>
</feature>
<feature type="binding site">
    <location>
        <position position="121"/>
    </location>
    <ligand>
        <name>Mg(2+)</name>
        <dbReference type="ChEBI" id="CHEBI:18420"/>
        <label>1</label>
    </ligand>
</feature>
<feature type="binding site">
    <location>
        <position position="121"/>
    </location>
    <ligand>
        <name>Mg(2+)</name>
        <dbReference type="ChEBI" id="CHEBI:18420"/>
        <label>2</label>
    </ligand>
</feature>
<feature type="binding site">
    <location>
        <position position="153"/>
    </location>
    <ligand>
        <name>Mg(2+)</name>
        <dbReference type="ChEBI" id="CHEBI:18420"/>
        <label>1</label>
    </ligand>
</feature>
<feature type="modified residue" description="Phosphothreonine" evidence="8">
    <location>
        <position position="65"/>
    </location>
</feature>
<feature type="modified residue" description="Phosphothreonine" evidence="6 7">
    <location>
        <position position="251"/>
    </location>
</feature>
<feature type="modified residue" description="Phosphoserine" evidence="8 9">
    <location>
        <position position="266"/>
    </location>
</feature>
<feature type="modified residue" description="Phosphoserine" evidence="6">
    <location>
        <position position="286"/>
    </location>
</feature>
<feature type="cross-link" description="Glycyl lysine isopeptide (Lys-Gly) (interchain with G-Cter in ubiquitin)" evidence="10">
    <location>
        <position position="239"/>
    </location>
</feature>
<feature type="cross-link" description="Glycyl lysine isopeptide (Lys-Gly) (interchain with G-Cter in ubiquitin)" evidence="10">
    <location>
        <position position="279"/>
    </location>
</feature>
<feature type="sequence conflict" description="In Ref. 5; AA sequence." evidence="5" ref="5">
    <original>N</original>
    <variation>D</variation>
    <location>
        <position position="41"/>
    </location>
</feature>
<feature type="sequence conflict" description="In Ref. 5; AA sequence." evidence="5" ref="5">
    <original>D</original>
    <variation>N</variation>
    <location>
        <position position="72"/>
    </location>
</feature>
<feature type="sequence conflict" description="In Ref. 5; AA sequence." evidence="5" ref="5">
    <location>
        <position position="75"/>
    </location>
</feature>
<feature type="sequence conflict" description="In Ref. 5; AA sequence." evidence="5" ref="5">
    <original>E</original>
    <variation>Q</variation>
    <location>
        <position position="124"/>
    </location>
</feature>
<feature type="sequence conflict" description="In Ref. 5; AA sequence." evidence="5" ref="5">
    <original>Q</original>
    <variation>E</variation>
    <location>
        <position position="137"/>
    </location>
</feature>
<feature type="sequence conflict" description="In Ref. 5; AA sequence." evidence="5" ref="5">
    <original>N</original>
    <variation>D</variation>
    <location>
        <position position="187"/>
    </location>
</feature>
<feature type="sequence conflict" description="In Ref. 5; AA sequence." evidence="5" ref="5">
    <original>D</original>
    <variation>N</variation>
    <location>
        <position position="225"/>
    </location>
</feature>
<feature type="sequence conflict" description="In Ref. 1; CAA31629." evidence="5" ref="1">
    <original>P</original>
    <variation>L</variation>
    <location>
        <position position="267"/>
    </location>
</feature>
<feature type="strand" evidence="12">
    <location>
        <begin position="3"/>
        <end position="10"/>
    </location>
</feature>
<feature type="strand" evidence="15">
    <location>
        <begin position="13"/>
        <end position="15"/>
    </location>
</feature>
<feature type="strand" evidence="12">
    <location>
        <begin position="17"/>
        <end position="22"/>
    </location>
</feature>
<feature type="strand" evidence="12">
    <location>
        <begin position="25"/>
        <end position="27"/>
    </location>
</feature>
<feature type="turn" evidence="12">
    <location>
        <begin position="29"/>
        <end position="32"/>
    </location>
</feature>
<feature type="strand" evidence="12">
    <location>
        <begin position="35"/>
        <end position="38"/>
    </location>
</feature>
<feature type="turn" evidence="12">
    <location>
        <begin position="39"/>
        <end position="42"/>
    </location>
</feature>
<feature type="strand" evidence="12">
    <location>
        <begin position="43"/>
        <end position="50"/>
    </location>
</feature>
<feature type="strand" evidence="12">
    <location>
        <begin position="58"/>
        <end position="60"/>
    </location>
</feature>
<feature type="strand" evidence="17">
    <location>
        <begin position="62"/>
        <end position="64"/>
    </location>
</feature>
<feature type="strand" evidence="12">
    <location>
        <begin position="69"/>
        <end position="71"/>
    </location>
</feature>
<feature type="strand" evidence="14">
    <location>
        <begin position="85"/>
        <end position="87"/>
    </location>
</feature>
<feature type="strand" evidence="12">
    <location>
        <begin position="91"/>
        <end position="96"/>
    </location>
</feature>
<feature type="strand" evidence="12">
    <location>
        <begin position="106"/>
        <end position="108"/>
    </location>
</feature>
<feature type="turn" evidence="12">
    <location>
        <begin position="109"/>
        <end position="112"/>
    </location>
</feature>
<feature type="strand" evidence="12">
    <location>
        <begin position="113"/>
        <end position="115"/>
    </location>
</feature>
<feature type="strand" evidence="16">
    <location>
        <begin position="117"/>
        <end position="119"/>
    </location>
</feature>
<feature type="strand" evidence="12">
    <location>
        <begin position="121"/>
        <end position="124"/>
    </location>
</feature>
<feature type="strand" evidence="13">
    <location>
        <begin position="126"/>
        <end position="128"/>
    </location>
</feature>
<feature type="strand" evidence="12">
    <location>
        <begin position="135"/>
        <end position="144"/>
    </location>
</feature>
<feature type="strand" evidence="12">
    <location>
        <begin position="146"/>
        <end position="148"/>
    </location>
</feature>
<feature type="strand" evidence="12">
    <location>
        <begin position="155"/>
        <end position="160"/>
    </location>
</feature>
<feature type="strand" evidence="14">
    <location>
        <begin position="163"/>
        <end position="165"/>
    </location>
</feature>
<feature type="helix" evidence="12">
    <location>
        <begin position="166"/>
        <end position="168"/>
    </location>
</feature>
<feature type="helix" evidence="12">
    <location>
        <begin position="172"/>
        <end position="178"/>
    </location>
</feature>
<feature type="helix" evidence="12">
    <location>
        <begin position="182"/>
        <end position="192"/>
    </location>
</feature>
<feature type="helix" evidence="12">
    <location>
        <begin position="195"/>
        <end position="197"/>
    </location>
</feature>
<feature type="helix" evidence="12">
    <location>
        <begin position="205"/>
        <end position="208"/>
    </location>
</feature>
<feature type="strand" evidence="11">
    <location>
        <begin position="210"/>
        <end position="212"/>
    </location>
</feature>
<feature type="helix" evidence="12">
    <location>
        <begin position="213"/>
        <end position="231"/>
    </location>
</feature>
<feature type="strand" evidence="12">
    <location>
        <begin position="245"/>
        <end position="247"/>
    </location>
</feature>
<feature type="helix" evidence="12">
    <location>
        <begin position="256"/>
        <end position="258"/>
    </location>
</feature>
<feature type="turn" evidence="12">
    <location>
        <begin position="259"/>
        <end position="261"/>
    </location>
</feature>
<feature type="strand" evidence="12">
    <location>
        <begin position="266"/>
        <end position="268"/>
    </location>
</feature>
<feature type="helix" evidence="12">
    <location>
        <begin position="275"/>
        <end position="278"/>
    </location>
</feature>
<sequence>MTYTTRQIGAKNTLEYKVYIEKDGKPVSAFHDIPLYADKENNIFNMVVEIPRWTNAKLEITKEETLNPIIQDTKKGKLRFVRNCFPHHGYIHNYGAFPQTWEDPNVSHPETKAVGDNDPIDVLEIGETIAYTGQVKQVKALGIMALLDEGETDWKVIAIDINDPLAPKLNDIEDVEKYFPGLLRATNEWFRIYKIPDGKPENQFAFSGEAKNKKYALDIIKETHDSWKQLIAGKSSDSKGIDLTNVTLPDTPTYSKAASDAIPPASPKADAPIDKSIDKWFFISGSV</sequence>